<organism>
    <name type="scientific">Mus musculus</name>
    <name type="common">Mouse</name>
    <dbReference type="NCBI Taxonomy" id="10090"/>
    <lineage>
        <taxon>Eukaryota</taxon>
        <taxon>Metazoa</taxon>
        <taxon>Chordata</taxon>
        <taxon>Craniata</taxon>
        <taxon>Vertebrata</taxon>
        <taxon>Euteleostomi</taxon>
        <taxon>Mammalia</taxon>
        <taxon>Eutheria</taxon>
        <taxon>Euarchontoglires</taxon>
        <taxon>Glires</taxon>
        <taxon>Rodentia</taxon>
        <taxon>Myomorpha</taxon>
        <taxon>Muroidea</taxon>
        <taxon>Muridae</taxon>
        <taxon>Murinae</taxon>
        <taxon>Mus</taxon>
        <taxon>Mus</taxon>
    </lineage>
</organism>
<protein>
    <recommendedName>
        <fullName>Tumor necrosis factor receptor superfamily member 23</fullName>
    </recommendedName>
    <alternativeName>
        <fullName>Decoy TRAIL receptor 1</fullName>
    </alternativeName>
    <alternativeName>
        <fullName>TNF receptor family member SOB</fullName>
    </alternativeName>
    <alternativeName>
        <fullName>TNF receptor homolog 1</fullName>
    </alternativeName>
    <alternativeName>
        <fullName>Tumor necrosis factor receptor p60 homolog 1</fullName>
    </alternativeName>
</protein>
<proteinExistence type="evidence at transcript level"/>
<accession>Q9ER63</accession>
<accession>Q8VHC0</accession>
<reference key="1">
    <citation type="journal article" date="2000" name="Hum. Mol. Genet.">
        <title>Sequence and functional comparison in the Beckwith-Wiedemann region: implications for a novel imprinting centre and extended imprinting.</title>
        <authorList>
            <person name="Engemann S."/>
            <person name="Stroedicke M."/>
            <person name="Paulsen M."/>
            <person name="Franck O."/>
            <person name="Reinhardt R."/>
            <person name="Lane N."/>
            <person name="Reik W."/>
            <person name="Walter J."/>
        </authorList>
    </citation>
    <scope>NUCLEOTIDE SEQUENCE [GENOMIC DNA / MRNA]</scope>
    <source>
        <strain>129/Sv</strain>
        <tissue>Embryonic stem cell</tissue>
    </source>
</reference>
<reference key="2">
    <citation type="journal article" date="2003" name="J. Biol. Chem.">
        <title>Identification of a new murine tumor necrosis factor receptor locus that contains two novel murine receptors for tumor necrosis factor-related apoptosis-inducing ligand (TRAIL).</title>
        <authorList>
            <person name="Schneider P."/>
            <person name="Olson D."/>
            <person name="Tardivel A."/>
            <person name="Browning B."/>
            <person name="Lugovskoy A."/>
            <person name="Gong D."/>
            <person name="Dobles M."/>
            <person name="Hertig S."/>
            <person name="Hofmann K."/>
            <person name="Van Vlijmen H."/>
            <person name="Hsu Y.-M."/>
            <person name="Burkly L.C."/>
            <person name="Tschopp J."/>
            <person name="Zheng T.S."/>
        </authorList>
    </citation>
    <scope>NUCLEOTIDE SEQUENCE [MRNA]</scope>
    <scope>FUNCTION</scope>
    <scope>SUBCELLULAR LOCATION</scope>
    <scope>3D-STRUCTURE MODELING OF 52-160</scope>
    <source>
        <strain>C57BL/6J</strain>
    </source>
</reference>
<reference key="3">
    <citation type="submission" date="2001-07" db="EMBL/GenBank/DDBJ databases">
        <title>Characterization of SOB, a member of the TNFR family.</title>
        <authorList>
            <person name="Pan G."/>
            <person name="Mao W."/>
            <person name="Risser P."/>
        </authorList>
    </citation>
    <scope>NUCLEOTIDE SEQUENCE</scope>
</reference>
<feature type="signal peptide">
    <location>
        <begin position="1"/>
        <end position="29"/>
    </location>
</feature>
<feature type="chain" id="PRO_0000034604" description="Tumor necrosis factor receptor superfamily member 23">
    <location>
        <begin position="30"/>
        <end position="155"/>
    </location>
</feature>
<feature type="propeptide" id="PRO_0000034605" description="Removed in mature form" evidence="1">
    <location>
        <begin position="156"/>
        <end position="176"/>
    </location>
</feature>
<feature type="repeat" description="TNFR-Cys 1">
    <location>
        <begin position="37"/>
        <end position="72"/>
    </location>
</feature>
<feature type="repeat" description="TNFR-Cys 2">
    <location>
        <begin position="74"/>
        <end position="114"/>
    </location>
</feature>
<feature type="repeat" description="TNFR-Cys 3">
    <location>
        <begin position="115"/>
        <end position="155"/>
    </location>
</feature>
<feature type="lipid moiety-binding region" description="GPI-anchor amidated cysteine" evidence="1">
    <location>
        <position position="155"/>
    </location>
</feature>
<feature type="glycosylation site" description="N-linked (GlcNAc...) asparagine" evidence="1">
    <location>
        <position position="148"/>
    </location>
</feature>
<feature type="disulfide bond" evidence="2">
    <location>
        <begin position="38"/>
        <end position="49"/>
    </location>
</feature>
<feature type="disulfide bond" evidence="2">
    <location>
        <begin position="50"/>
        <end position="63"/>
    </location>
</feature>
<feature type="disulfide bond" evidence="2">
    <location>
        <begin position="53"/>
        <end position="72"/>
    </location>
</feature>
<feature type="disulfide bond" evidence="2">
    <location>
        <begin position="75"/>
        <end position="90"/>
    </location>
</feature>
<feature type="disulfide bond" evidence="2">
    <location>
        <begin position="93"/>
        <end position="106"/>
    </location>
</feature>
<feature type="disulfide bond" evidence="2">
    <location>
        <begin position="96"/>
        <end position="114"/>
    </location>
</feature>
<feature type="disulfide bond" evidence="2">
    <location>
        <begin position="116"/>
        <end position="131"/>
    </location>
</feature>
<feature type="disulfide bond" evidence="2">
    <location>
        <begin position="134"/>
        <end position="147"/>
    </location>
</feature>
<feature type="disulfide bond" evidence="2">
    <location>
        <begin position="137"/>
        <end position="155"/>
    </location>
</feature>
<evidence type="ECO:0000255" key="1"/>
<evidence type="ECO:0000255" key="2">
    <source>
        <dbReference type="PROSITE-ProRule" id="PRU00206"/>
    </source>
</evidence>
<evidence type="ECO:0000269" key="3">
    <source>
    </source>
</evidence>
<comment type="function">
    <text evidence="3">Receptor for the cytotoxic ligand TRAIL. Lacks a cytoplasmic death domain and hence is not capable of inducing apoptosis. May protect cells against TRAIL mediated apoptosis through ligand competition. Cannot induce the NF-kappa-B pathway.</text>
</comment>
<comment type="subcellular location">
    <subcellularLocation>
        <location evidence="3">Cell membrane</location>
        <topology evidence="3">Lipid-anchor</topology>
        <topology evidence="3">GPI-anchor</topology>
    </subcellularLocation>
</comment>
<comment type="tissue specificity">
    <text>Ubiquitous.</text>
</comment>
<name>TNR23_MOUSE</name>
<gene>
    <name type="primary">Tnfrsf23</name>
    <name type="synonym">Dctrailr1</name>
    <name type="synonym">Tnfrh1</name>
    <name type="synonym">Tnfrsf1al1</name>
</gene>
<sequence>MVTFSHVSSLSHWFLLLLLLNLFLPVIFAMPESYSFNCPDGEYQSNDVCCKTCPSGTFVKAPCKIPHTQGQCEKCHPGTFTGKDNGLHDCELCSTCDKDQNMVADCSATSDRKCECQIGLYYYDPKFPESCRPCTKCPQGIPVLQECNSTANTVCSSSVSNPRNWLFLLMLIVFCI</sequence>
<keyword id="KW-1003">Cell membrane</keyword>
<keyword id="KW-1015">Disulfide bond</keyword>
<keyword id="KW-0325">Glycoprotein</keyword>
<keyword id="KW-0336">GPI-anchor</keyword>
<keyword id="KW-0449">Lipoprotein</keyword>
<keyword id="KW-0472">Membrane</keyword>
<keyword id="KW-0675">Receptor</keyword>
<keyword id="KW-1185">Reference proteome</keyword>
<keyword id="KW-0677">Repeat</keyword>
<keyword id="KW-0732">Signal</keyword>
<dbReference type="EMBL" id="AJ278264">
    <property type="protein sequence ID" value="CAC16405.1"/>
    <property type="molecule type" value="mRNA"/>
</dbReference>
<dbReference type="EMBL" id="AJ276505">
    <property type="protein sequence ID" value="CAC27352.1"/>
    <property type="molecule type" value="Genomic_DNA"/>
</dbReference>
<dbReference type="EMBL" id="AY165625">
    <property type="protein sequence ID" value="AAN87805.1"/>
    <property type="molecule type" value="mRNA"/>
</dbReference>
<dbReference type="EMBL" id="AY046550">
    <property type="protein sequence ID" value="AAL05072.1"/>
    <property type="molecule type" value="mRNA"/>
</dbReference>
<dbReference type="CCDS" id="CCDS22044.1"/>
<dbReference type="RefSeq" id="NP_077252.2">
    <property type="nucleotide sequence ID" value="NM_024290.4"/>
</dbReference>
<dbReference type="SMR" id="Q9ER63"/>
<dbReference type="BioGRID" id="219742">
    <property type="interactions" value="4"/>
</dbReference>
<dbReference type="FunCoup" id="Q9ER63">
    <property type="interactions" value="2"/>
</dbReference>
<dbReference type="STRING" id="10090.ENSMUSP00000116742"/>
<dbReference type="GlyCosmos" id="Q9ER63">
    <property type="glycosylation" value="1 site, No reported glycans"/>
</dbReference>
<dbReference type="GlyGen" id="Q9ER63">
    <property type="glycosylation" value="1 site"/>
</dbReference>
<dbReference type="jPOST" id="Q9ER63"/>
<dbReference type="PaxDb" id="10090-ENSMUSP00000116742"/>
<dbReference type="ProteomicsDB" id="259288"/>
<dbReference type="Pumba" id="Q9ER63"/>
<dbReference type="DNASU" id="79201"/>
<dbReference type="Ensembl" id="ENSMUST00000152703.2">
    <property type="protein sequence ID" value="ENSMUSP00000116742.2"/>
    <property type="gene ID" value="ENSMUSG00000037613.17"/>
</dbReference>
<dbReference type="GeneID" id="79201"/>
<dbReference type="KEGG" id="mmu:79201"/>
<dbReference type="UCSC" id="uc009kpu.1">
    <property type="organism name" value="mouse"/>
</dbReference>
<dbReference type="AGR" id="MGI:1930269"/>
<dbReference type="CTD" id="79201"/>
<dbReference type="MGI" id="MGI:1930269">
    <property type="gene designation" value="Tnfrsf23"/>
</dbReference>
<dbReference type="VEuPathDB" id="HostDB:ENSMUSG00000037613"/>
<dbReference type="eggNOG" id="ENOG502RBEC">
    <property type="taxonomic scope" value="Eukaryota"/>
</dbReference>
<dbReference type="GeneTree" id="ENSGT00930000151070"/>
<dbReference type="HOGENOM" id="CLU_130470_0_0_1"/>
<dbReference type="InParanoid" id="Q9ER63"/>
<dbReference type="OMA" id="RECACED"/>
<dbReference type="OrthoDB" id="8848202at2759"/>
<dbReference type="PhylomeDB" id="Q9ER63"/>
<dbReference type="TreeFam" id="TF333916"/>
<dbReference type="BioGRID-ORCS" id="79201">
    <property type="hits" value="3 hits in 76 CRISPR screens"/>
</dbReference>
<dbReference type="PRO" id="PR:Q9ER63"/>
<dbReference type="Proteomes" id="UP000000589">
    <property type="component" value="Chromosome 7"/>
</dbReference>
<dbReference type="RNAct" id="Q9ER63">
    <property type="molecule type" value="protein"/>
</dbReference>
<dbReference type="Bgee" id="ENSMUSG00000037613">
    <property type="expression patterns" value="Expressed in decidua and 75 other cell types or tissues"/>
</dbReference>
<dbReference type="ExpressionAtlas" id="Q9ER63">
    <property type="expression patterns" value="baseline and differential"/>
</dbReference>
<dbReference type="GO" id="GO:0009897">
    <property type="term" value="C:external side of plasma membrane"/>
    <property type="evidence" value="ECO:0000314"/>
    <property type="project" value="MGI"/>
</dbReference>
<dbReference type="GO" id="GO:1902042">
    <property type="term" value="P:negative regulation of extrinsic apoptotic signaling pathway via death domain receptors"/>
    <property type="evidence" value="ECO:0000314"/>
    <property type="project" value="MGI"/>
</dbReference>
<dbReference type="CDD" id="cd15837">
    <property type="entry name" value="TNFRSF26"/>
    <property type="match status" value="1"/>
</dbReference>
<dbReference type="FunFam" id="2.10.50.10:FF:000087">
    <property type="entry name" value="Tumor necrosis factor receptor superfamily member 23"/>
    <property type="match status" value="1"/>
</dbReference>
<dbReference type="Gene3D" id="2.10.50.10">
    <property type="entry name" value="Tumor Necrosis Factor Receptor, subunit A, domain 2"/>
    <property type="match status" value="2"/>
</dbReference>
<dbReference type="InterPro" id="IPR001368">
    <property type="entry name" value="TNFR/NGFR_Cys_rich_reg"/>
</dbReference>
<dbReference type="InterPro" id="IPR052491">
    <property type="entry name" value="TNFRSF10"/>
</dbReference>
<dbReference type="InterPro" id="IPR034062">
    <property type="entry name" value="TNFRSF26_N"/>
</dbReference>
<dbReference type="PANTHER" id="PTHR46330">
    <property type="entry name" value="TUMOR NECROSIS FACTOR RECEPTOR SUPERFAMILY MEMBER 10B"/>
    <property type="match status" value="1"/>
</dbReference>
<dbReference type="PANTHER" id="PTHR46330:SF16">
    <property type="entry name" value="TUMOR NECROSIS FACTOR RECEPTOR SUPERFAMILY MEMBER 22"/>
    <property type="match status" value="1"/>
</dbReference>
<dbReference type="Pfam" id="PF00020">
    <property type="entry name" value="TNFR_c6"/>
    <property type="match status" value="3"/>
</dbReference>
<dbReference type="SMART" id="SM00208">
    <property type="entry name" value="TNFR"/>
    <property type="match status" value="3"/>
</dbReference>
<dbReference type="SUPFAM" id="SSF57586">
    <property type="entry name" value="TNF receptor-like"/>
    <property type="match status" value="2"/>
</dbReference>
<dbReference type="PROSITE" id="PS00652">
    <property type="entry name" value="TNFR_NGFR_1"/>
    <property type="match status" value="3"/>
</dbReference>
<dbReference type="PROSITE" id="PS50050">
    <property type="entry name" value="TNFR_NGFR_2"/>
    <property type="match status" value="2"/>
</dbReference>